<feature type="chain" id="PRO_1000133175" description="Oxygen-dependent coproporphyrinogen-III oxidase">
    <location>
        <begin position="1"/>
        <end position="303"/>
    </location>
</feature>
<feature type="region of interest" description="Disordered" evidence="2">
    <location>
        <begin position="43"/>
        <end position="62"/>
    </location>
</feature>
<feature type="region of interest" description="Important for dimerization" evidence="1">
    <location>
        <begin position="268"/>
        <end position="303"/>
    </location>
</feature>
<feature type="compositionally biased region" description="Basic and acidic residues" evidence="2">
    <location>
        <begin position="48"/>
        <end position="62"/>
    </location>
</feature>
<feature type="active site" description="Proton donor" evidence="1">
    <location>
        <position position="130"/>
    </location>
</feature>
<feature type="binding site" evidence="1">
    <location>
        <position position="116"/>
    </location>
    <ligand>
        <name>substrate</name>
    </ligand>
</feature>
<feature type="binding site" evidence="1">
    <location>
        <position position="120"/>
    </location>
    <ligand>
        <name>a divalent metal cation</name>
        <dbReference type="ChEBI" id="CHEBI:60240"/>
    </ligand>
</feature>
<feature type="binding site" evidence="1">
    <location>
        <position position="130"/>
    </location>
    <ligand>
        <name>a divalent metal cation</name>
        <dbReference type="ChEBI" id="CHEBI:60240"/>
    </ligand>
</feature>
<feature type="binding site" evidence="1">
    <location>
        <begin position="132"/>
        <end position="134"/>
    </location>
    <ligand>
        <name>substrate</name>
    </ligand>
</feature>
<feature type="binding site" evidence="1">
    <location>
        <position position="168"/>
    </location>
    <ligand>
        <name>a divalent metal cation</name>
        <dbReference type="ChEBI" id="CHEBI:60240"/>
    </ligand>
</feature>
<feature type="binding site" evidence="1">
    <location>
        <position position="199"/>
    </location>
    <ligand>
        <name>a divalent metal cation</name>
        <dbReference type="ChEBI" id="CHEBI:60240"/>
    </ligand>
</feature>
<feature type="binding site" evidence="1">
    <location>
        <begin position="286"/>
        <end position="288"/>
    </location>
    <ligand>
        <name>substrate</name>
    </ligand>
</feature>
<feature type="site" description="Important for dimerization" evidence="1">
    <location>
        <position position="199"/>
    </location>
</feature>
<name>HEM6_BRUMB</name>
<evidence type="ECO:0000255" key="1">
    <source>
        <dbReference type="HAMAP-Rule" id="MF_00333"/>
    </source>
</evidence>
<evidence type="ECO:0000256" key="2">
    <source>
        <dbReference type="SAM" id="MobiDB-lite"/>
    </source>
</evidence>
<proteinExistence type="inferred from homology"/>
<accession>C0REI6</accession>
<comment type="function">
    <text evidence="1">Involved in the heme biosynthesis. Catalyzes the aerobic oxidative decarboxylation of propionate groups of rings A and B of coproporphyrinogen-III to yield the vinyl groups in protoporphyrinogen-IX.</text>
</comment>
<comment type="catalytic activity">
    <reaction evidence="1">
        <text>coproporphyrinogen III + O2 + 2 H(+) = protoporphyrinogen IX + 2 CO2 + 2 H2O</text>
        <dbReference type="Rhea" id="RHEA:18257"/>
        <dbReference type="ChEBI" id="CHEBI:15377"/>
        <dbReference type="ChEBI" id="CHEBI:15378"/>
        <dbReference type="ChEBI" id="CHEBI:15379"/>
        <dbReference type="ChEBI" id="CHEBI:16526"/>
        <dbReference type="ChEBI" id="CHEBI:57307"/>
        <dbReference type="ChEBI" id="CHEBI:57309"/>
        <dbReference type="EC" id="1.3.3.3"/>
    </reaction>
</comment>
<comment type="cofactor">
    <cofactor evidence="1">
        <name>a divalent metal cation</name>
        <dbReference type="ChEBI" id="CHEBI:60240"/>
    </cofactor>
</comment>
<comment type="pathway">
    <text evidence="1">Porphyrin-containing compound metabolism; protoporphyrin-IX biosynthesis; protoporphyrinogen-IX from coproporphyrinogen-III (O2 route): step 1/1.</text>
</comment>
<comment type="subunit">
    <text evidence="1">Homodimer.</text>
</comment>
<comment type="subcellular location">
    <subcellularLocation>
        <location evidence="1">Cytoplasm</location>
    </subcellularLocation>
</comment>
<comment type="similarity">
    <text evidence="1">Belongs to the aerobic coproporphyrinogen-III oxidase family.</text>
</comment>
<protein>
    <recommendedName>
        <fullName evidence="1">Oxygen-dependent coproporphyrinogen-III oxidase</fullName>
        <shortName evidence="1">CPO</shortName>
        <shortName evidence="1">Coprogen oxidase</shortName>
        <shortName evidence="1">Coproporphyrinogenase</shortName>
        <ecNumber evidence="1">1.3.3.3</ecNumber>
    </recommendedName>
</protein>
<sequence length="303" mass="35111">MKREDIPAIIPADIEEKKKAAQSWFEELRDRICASYEQLEDELQGPLSDREPGRFVRTPWQKDDGNGGGVMSIMHGRVFEKVGVHVSTVHGEFSPEFRKQIPGAEEDPRYWASGISLIAHPQNPNVPAVHMNTRMIVTTRQWFAGGADLTPVLDRRRTQEDPDTLAFHKAFRFICEKHKDIVDYQRLKEWCDEYFFLPHRDEPRGIGGIFYDWLHSPEEKGGWDSDFAFTRDVGRGFSVVYPHLVRQNFNKDWTEADRDEQLIRRGRYVEFNLLYDRGTIFGLKTGGNMNAILSSMPPVVKWP</sequence>
<organism>
    <name type="scientific">Brucella melitensis biotype 2 (strain ATCC 23457)</name>
    <dbReference type="NCBI Taxonomy" id="546272"/>
    <lineage>
        <taxon>Bacteria</taxon>
        <taxon>Pseudomonadati</taxon>
        <taxon>Pseudomonadota</taxon>
        <taxon>Alphaproteobacteria</taxon>
        <taxon>Hyphomicrobiales</taxon>
        <taxon>Brucellaceae</taxon>
        <taxon>Brucella/Ochrobactrum group</taxon>
        <taxon>Brucella</taxon>
    </lineage>
</organism>
<dbReference type="EC" id="1.3.3.3" evidence="1"/>
<dbReference type="EMBL" id="CP001488">
    <property type="protein sequence ID" value="ACO01308.1"/>
    <property type="molecule type" value="Genomic_DNA"/>
</dbReference>
<dbReference type="RefSeq" id="WP_002964654.1">
    <property type="nucleotide sequence ID" value="NC_012441.1"/>
</dbReference>
<dbReference type="SMR" id="C0REI6"/>
<dbReference type="GeneID" id="97533266"/>
<dbReference type="KEGG" id="bmi:BMEA_A1605"/>
<dbReference type="HOGENOM" id="CLU_026169_0_1_5"/>
<dbReference type="UniPathway" id="UPA00251">
    <property type="reaction ID" value="UER00322"/>
</dbReference>
<dbReference type="Proteomes" id="UP000001748">
    <property type="component" value="Chromosome I"/>
</dbReference>
<dbReference type="GO" id="GO:0005737">
    <property type="term" value="C:cytoplasm"/>
    <property type="evidence" value="ECO:0007669"/>
    <property type="project" value="UniProtKB-SubCell"/>
</dbReference>
<dbReference type="GO" id="GO:0004109">
    <property type="term" value="F:coproporphyrinogen oxidase activity"/>
    <property type="evidence" value="ECO:0007669"/>
    <property type="project" value="UniProtKB-UniRule"/>
</dbReference>
<dbReference type="GO" id="GO:0046872">
    <property type="term" value="F:metal ion binding"/>
    <property type="evidence" value="ECO:0007669"/>
    <property type="project" value="UniProtKB-KW"/>
</dbReference>
<dbReference type="GO" id="GO:0042803">
    <property type="term" value="F:protein homodimerization activity"/>
    <property type="evidence" value="ECO:0000250"/>
    <property type="project" value="UniProtKB"/>
</dbReference>
<dbReference type="GO" id="GO:0006782">
    <property type="term" value="P:protoporphyrinogen IX biosynthetic process"/>
    <property type="evidence" value="ECO:0007669"/>
    <property type="project" value="UniProtKB-UniRule"/>
</dbReference>
<dbReference type="FunFam" id="3.40.1500.10:FF:000005">
    <property type="entry name" value="Oxygen-dependent coproporphyrinogen-III oxidase"/>
    <property type="match status" value="1"/>
</dbReference>
<dbReference type="Gene3D" id="3.40.1500.10">
    <property type="entry name" value="Coproporphyrinogen III oxidase, aerobic"/>
    <property type="match status" value="1"/>
</dbReference>
<dbReference type="HAMAP" id="MF_00333">
    <property type="entry name" value="Coprogen_oxidas"/>
    <property type="match status" value="1"/>
</dbReference>
<dbReference type="InterPro" id="IPR001260">
    <property type="entry name" value="Coprogen_oxidase_aer"/>
</dbReference>
<dbReference type="InterPro" id="IPR036406">
    <property type="entry name" value="Coprogen_oxidase_aer_sf"/>
</dbReference>
<dbReference type="InterPro" id="IPR018375">
    <property type="entry name" value="Coprogen_oxidase_CS"/>
</dbReference>
<dbReference type="NCBIfam" id="NF003727">
    <property type="entry name" value="PRK05330.1"/>
    <property type="match status" value="1"/>
</dbReference>
<dbReference type="PANTHER" id="PTHR10755">
    <property type="entry name" value="COPROPORPHYRINOGEN III OXIDASE, MITOCHONDRIAL"/>
    <property type="match status" value="1"/>
</dbReference>
<dbReference type="PANTHER" id="PTHR10755:SF0">
    <property type="entry name" value="OXYGEN-DEPENDENT COPROPORPHYRINOGEN-III OXIDASE, MITOCHONDRIAL"/>
    <property type="match status" value="1"/>
</dbReference>
<dbReference type="Pfam" id="PF01218">
    <property type="entry name" value="Coprogen_oxidas"/>
    <property type="match status" value="1"/>
</dbReference>
<dbReference type="PIRSF" id="PIRSF000166">
    <property type="entry name" value="Coproporphyri_ox"/>
    <property type="match status" value="1"/>
</dbReference>
<dbReference type="PRINTS" id="PR00073">
    <property type="entry name" value="COPRGNOXDASE"/>
</dbReference>
<dbReference type="SUPFAM" id="SSF102886">
    <property type="entry name" value="Coproporphyrinogen III oxidase"/>
    <property type="match status" value="1"/>
</dbReference>
<dbReference type="PROSITE" id="PS01021">
    <property type="entry name" value="COPROGEN_OXIDASE"/>
    <property type="match status" value="1"/>
</dbReference>
<reference key="1">
    <citation type="submission" date="2009-03" db="EMBL/GenBank/DDBJ databases">
        <title>Brucella melitensis ATCC 23457 whole genome shotgun sequencing project.</title>
        <authorList>
            <person name="Setubal J.C."/>
            <person name="Boyle S."/>
            <person name="Crasta O.R."/>
            <person name="Gillespie J.J."/>
            <person name="Kenyon R.W."/>
            <person name="Lu J."/>
            <person name="Mane S."/>
            <person name="Nagrani S."/>
            <person name="Shallom J.M."/>
            <person name="Shallom S."/>
            <person name="Shukla M."/>
            <person name="Snyder E.E."/>
            <person name="Sobral B.W."/>
            <person name="Wattam A.R."/>
            <person name="Will R."/>
            <person name="Williams K."/>
            <person name="Yoo H."/>
            <person name="Munk C."/>
            <person name="Tapia R."/>
            <person name="Han C."/>
            <person name="Detter J.C."/>
            <person name="Bruce D."/>
            <person name="Brettin T.S."/>
        </authorList>
    </citation>
    <scope>NUCLEOTIDE SEQUENCE [LARGE SCALE GENOMIC DNA]</scope>
    <source>
        <strain>ATCC 23457</strain>
    </source>
</reference>
<keyword id="KW-0963">Cytoplasm</keyword>
<keyword id="KW-0350">Heme biosynthesis</keyword>
<keyword id="KW-0479">Metal-binding</keyword>
<keyword id="KW-0560">Oxidoreductase</keyword>
<keyword id="KW-0627">Porphyrin biosynthesis</keyword>
<gene>
    <name evidence="1" type="primary">hemF</name>
    <name type="ordered locus">BMEA_A1605</name>
</gene>